<feature type="chain" id="PRO_0000302839" description="Serine/threonine/tyrosine-interacting-like protein 2">
    <location>
        <begin position="1"/>
        <end position="1138"/>
    </location>
</feature>
<feature type="domain" description="Tyrosine-protein phosphatase" evidence="2">
    <location>
        <begin position="132"/>
        <end position="280"/>
    </location>
</feature>
<feature type="region of interest" description="Disordered" evidence="3">
    <location>
        <begin position="1"/>
        <end position="20"/>
    </location>
</feature>
<feature type="region of interest" description="Disordered" evidence="3">
    <location>
        <begin position="309"/>
        <end position="336"/>
    </location>
</feature>
<feature type="region of interest" description="Disordered" evidence="3">
    <location>
        <begin position="348"/>
        <end position="473"/>
    </location>
</feature>
<feature type="region of interest" description="Disordered" evidence="3">
    <location>
        <begin position="486"/>
        <end position="515"/>
    </location>
</feature>
<feature type="region of interest" description="Disordered" evidence="3">
    <location>
        <begin position="552"/>
        <end position="575"/>
    </location>
</feature>
<feature type="region of interest" description="Disordered" evidence="3">
    <location>
        <begin position="592"/>
        <end position="618"/>
    </location>
</feature>
<feature type="region of interest" description="Disordered" evidence="3">
    <location>
        <begin position="660"/>
        <end position="694"/>
    </location>
</feature>
<feature type="region of interest" description="Disordered" evidence="3">
    <location>
        <begin position="761"/>
        <end position="800"/>
    </location>
</feature>
<feature type="region of interest" description="Disordered" evidence="3">
    <location>
        <begin position="850"/>
        <end position="1117"/>
    </location>
</feature>
<feature type="compositionally biased region" description="Polar residues" evidence="3">
    <location>
        <begin position="316"/>
        <end position="331"/>
    </location>
</feature>
<feature type="compositionally biased region" description="Acidic residues" evidence="3">
    <location>
        <begin position="376"/>
        <end position="385"/>
    </location>
</feature>
<feature type="compositionally biased region" description="Basic and acidic residues" evidence="3">
    <location>
        <begin position="386"/>
        <end position="409"/>
    </location>
</feature>
<feature type="compositionally biased region" description="Basic and acidic residues" evidence="3">
    <location>
        <begin position="552"/>
        <end position="567"/>
    </location>
</feature>
<feature type="compositionally biased region" description="Basic and acidic residues" evidence="3">
    <location>
        <begin position="595"/>
        <end position="614"/>
    </location>
</feature>
<feature type="compositionally biased region" description="Polar residues" evidence="3">
    <location>
        <begin position="672"/>
        <end position="687"/>
    </location>
</feature>
<feature type="compositionally biased region" description="Low complexity" evidence="3">
    <location>
        <begin position="773"/>
        <end position="788"/>
    </location>
</feature>
<feature type="compositionally biased region" description="Acidic residues" evidence="3">
    <location>
        <begin position="858"/>
        <end position="871"/>
    </location>
</feature>
<feature type="compositionally biased region" description="Polar residues" evidence="3">
    <location>
        <begin position="878"/>
        <end position="897"/>
    </location>
</feature>
<feature type="compositionally biased region" description="Low complexity" evidence="3">
    <location>
        <begin position="936"/>
        <end position="947"/>
    </location>
</feature>
<feature type="compositionally biased region" description="Basic and acidic residues" evidence="3">
    <location>
        <begin position="965"/>
        <end position="977"/>
    </location>
</feature>
<feature type="compositionally biased region" description="Polar residues" evidence="3">
    <location>
        <begin position="980"/>
        <end position="992"/>
    </location>
</feature>
<feature type="compositionally biased region" description="Basic and acidic residues" evidence="3">
    <location>
        <begin position="1035"/>
        <end position="1059"/>
    </location>
</feature>
<feature type="compositionally biased region" description="Basic and acidic residues" evidence="3">
    <location>
        <begin position="1074"/>
        <end position="1091"/>
    </location>
</feature>
<feature type="compositionally biased region" description="Polar residues" evidence="3">
    <location>
        <begin position="1095"/>
        <end position="1106"/>
    </location>
</feature>
<feature type="compositionally biased region" description="Acidic residues" evidence="3">
    <location>
        <begin position="1107"/>
        <end position="1116"/>
    </location>
</feature>
<feature type="modified residue" description="Phosphoserine" evidence="6">
    <location>
        <position position="291"/>
    </location>
</feature>
<feature type="modified residue" description="Phosphoserine" evidence="6">
    <location>
        <position position="373"/>
    </location>
</feature>
<feature type="modified residue" description="Phosphothreonine" evidence="6">
    <location>
        <position position="427"/>
    </location>
</feature>
<feature type="modified residue" description="Phosphoserine" evidence="6">
    <location>
        <position position="503"/>
    </location>
</feature>
<feature type="modified residue" description="Phosphoserine" evidence="6">
    <location>
        <position position="555"/>
    </location>
</feature>
<feature type="modified residue" description="Phosphoserine" evidence="6">
    <location>
        <position position="862"/>
    </location>
</feature>
<feature type="modified residue" description="Phosphoserine" evidence="6">
    <location>
        <position position="929"/>
    </location>
</feature>
<feature type="modified residue" description="Phosphoserine" evidence="6">
    <location>
        <position position="966"/>
    </location>
</feature>
<feature type="modified residue" description="Phosphoserine" evidence="6">
    <location>
        <position position="1016"/>
    </location>
</feature>
<feature type="sequence conflict" description="In Ref. 1; BAE25001." evidence="4" ref="1">
    <original>E</original>
    <variation>D</variation>
    <location>
        <position position="145"/>
    </location>
</feature>
<feature type="sequence conflict" description="In Ref. 1; BAC33386." evidence="4" ref="1">
    <original>K</original>
    <variation>R</variation>
    <location>
        <position position="856"/>
    </location>
</feature>
<name>STYL2_MOUSE</name>
<reference key="1">
    <citation type="journal article" date="2005" name="Science">
        <title>The transcriptional landscape of the mammalian genome.</title>
        <authorList>
            <person name="Carninci P."/>
            <person name="Kasukawa T."/>
            <person name="Katayama S."/>
            <person name="Gough J."/>
            <person name="Frith M.C."/>
            <person name="Maeda N."/>
            <person name="Oyama R."/>
            <person name="Ravasi T."/>
            <person name="Lenhard B."/>
            <person name="Wells C."/>
            <person name="Kodzius R."/>
            <person name="Shimokawa K."/>
            <person name="Bajic V.B."/>
            <person name="Brenner S.E."/>
            <person name="Batalov S."/>
            <person name="Forrest A.R."/>
            <person name="Zavolan M."/>
            <person name="Davis M.J."/>
            <person name="Wilming L.G."/>
            <person name="Aidinis V."/>
            <person name="Allen J.E."/>
            <person name="Ambesi-Impiombato A."/>
            <person name="Apweiler R."/>
            <person name="Aturaliya R.N."/>
            <person name="Bailey T.L."/>
            <person name="Bansal M."/>
            <person name="Baxter L."/>
            <person name="Beisel K.W."/>
            <person name="Bersano T."/>
            <person name="Bono H."/>
            <person name="Chalk A.M."/>
            <person name="Chiu K.P."/>
            <person name="Choudhary V."/>
            <person name="Christoffels A."/>
            <person name="Clutterbuck D.R."/>
            <person name="Crowe M.L."/>
            <person name="Dalla E."/>
            <person name="Dalrymple B.P."/>
            <person name="de Bono B."/>
            <person name="Della Gatta G."/>
            <person name="di Bernardo D."/>
            <person name="Down T."/>
            <person name="Engstrom P."/>
            <person name="Fagiolini M."/>
            <person name="Faulkner G."/>
            <person name="Fletcher C.F."/>
            <person name="Fukushima T."/>
            <person name="Furuno M."/>
            <person name="Futaki S."/>
            <person name="Gariboldi M."/>
            <person name="Georgii-Hemming P."/>
            <person name="Gingeras T.R."/>
            <person name="Gojobori T."/>
            <person name="Green R.E."/>
            <person name="Gustincich S."/>
            <person name="Harbers M."/>
            <person name="Hayashi Y."/>
            <person name="Hensch T.K."/>
            <person name="Hirokawa N."/>
            <person name="Hill D."/>
            <person name="Huminiecki L."/>
            <person name="Iacono M."/>
            <person name="Ikeo K."/>
            <person name="Iwama A."/>
            <person name="Ishikawa T."/>
            <person name="Jakt M."/>
            <person name="Kanapin A."/>
            <person name="Katoh M."/>
            <person name="Kawasawa Y."/>
            <person name="Kelso J."/>
            <person name="Kitamura H."/>
            <person name="Kitano H."/>
            <person name="Kollias G."/>
            <person name="Krishnan S.P."/>
            <person name="Kruger A."/>
            <person name="Kummerfeld S.K."/>
            <person name="Kurochkin I.V."/>
            <person name="Lareau L.F."/>
            <person name="Lazarevic D."/>
            <person name="Lipovich L."/>
            <person name="Liu J."/>
            <person name="Liuni S."/>
            <person name="McWilliam S."/>
            <person name="Madan Babu M."/>
            <person name="Madera M."/>
            <person name="Marchionni L."/>
            <person name="Matsuda H."/>
            <person name="Matsuzawa S."/>
            <person name="Miki H."/>
            <person name="Mignone F."/>
            <person name="Miyake S."/>
            <person name="Morris K."/>
            <person name="Mottagui-Tabar S."/>
            <person name="Mulder N."/>
            <person name="Nakano N."/>
            <person name="Nakauchi H."/>
            <person name="Ng P."/>
            <person name="Nilsson R."/>
            <person name="Nishiguchi S."/>
            <person name="Nishikawa S."/>
            <person name="Nori F."/>
            <person name="Ohara O."/>
            <person name="Okazaki Y."/>
            <person name="Orlando V."/>
            <person name="Pang K.C."/>
            <person name="Pavan W.J."/>
            <person name="Pavesi G."/>
            <person name="Pesole G."/>
            <person name="Petrovsky N."/>
            <person name="Piazza S."/>
            <person name="Reed J."/>
            <person name="Reid J.F."/>
            <person name="Ring B.Z."/>
            <person name="Ringwald M."/>
            <person name="Rost B."/>
            <person name="Ruan Y."/>
            <person name="Salzberg S.L."/>
            <person name="Sandelin A."/>
            <person name="Schneider C."/>
            <person name="Schoenbach C."/>
            <person name="Sekiguchi K."/>
            <person name="Semple C.A."/>
            <person name="Seno S."/>
            <person name="Sessa L."/>
            <person name="Sheng Y."/>
            <person name="Shibata Y."/>
            <person name="Shimada H."/>
            <person name="Shimada K."/>
            <person name="Silva D."/>
            <person name="Sinclair B."/>
            <person name="Sperling S."/>
            <person name="Stupka E."/>
            <person name="Sugiura K."/>
            <person name="Sultana R."/>
            <person name="Takenaka Y."/>
            <person name="Taki K."/>
            <person name="Tammoja K."/>
            <person name="Tan S.L."/>
            <person name="Tang S."/>
            <person name="Taylor M.S."/>
            <person name="Tegner J."/>
            <person name="Teichmann S.A."/>
            <person name="Ueda H.R."/>
            <person name="van Nimwegen E."/>
            <person name="Verardo R."/>
            <person name="Wei C.L."/>
            <person name="Yagi K."/>
            <person name="Yamanishi H."/>
            <person name="Zabarovsky E."/>
            <person name="Zhu S."/>
            <person name="Zimmer A."/>
            <person name="Hide W."/>
            <person name="Bult C."/>
            <person name="Grimmond S.M."/>
            <person name="Teasdale R.D."/>
            <person name="Liu E.T."/>
            <person name="Brusic V."/>
            <person name="Quackenbush J."/>
            <person name="Wahlestedt C."/>
            <person name="Mattick J.S."/>
            <person name="Hume D.A."/>
            <person name="Kai C."/>
            <person name="Sasaki D."/>
            <person name="Tomaru Y."/>
            <person name="Fukuda S."/>
            <person name="Kanamori-Katayama M."/>
            <person name="Suzuki M."/>
            <person name="Aoki J."/>
            <person name="Arakawa T."/>
            <person name="Iida J."/>
            <person name="Imamura K."/>
            <person name="Itoh M."/>
            <person name="Kato T."/>
            <person name="Kawaji H."/>
            <person name="Kawagashira N."/>
            <person name="Kawashima T."/>
            <person name="Kojima M."/>
            <person name="Kondo S."/>
            <person name="Konno H."/>
            <person name="Nakano K."/>
            <person name="Ninomiya N."/>
            <person name="Nishio T."/>
            <person name="Okada M."/>
            <person name="Plessy C."/>
            <person name="Shibata K."/>
            <person name="Shiraki T."/>
            <person name="Suzuki S."/>
            <person name="Tagami M."/>
            <person name="Waki K."/>
            <person name="Watahiki A."/>
            <person name="Okamura-Oho Y."/>
            <person name="Suzuki H."/>
            <person name="Kawai J."/>
            <person name="Hayashizaki Y."/>
        </authorList>
    </citation>
    <scope>NUCLEOTIDE SEQUENCE [LARGE SCALE MRNA]</scope>
    <source>
        <strain>C57BL/6J</strain>
        <tissue>Head</tissue>
        <tissue>Heart</tissue>
    </source>
</reference>
<reference key="2">
    <citation type="journal article" date="2004" name="Genome Res.">
        <title>The status, quality, and expansion of the NIH full-length cDNA project: the Mammalian Gene Collection (MGC).</title>
        <authorList>
            <consortium name="The MGC Project Team"/>
        </authorList>
    </citation>
    <scope>NUCLEOTIDE SEQUENCE [LARGE SCALE MRNA]</scope>
    <source>
        <strain>C57BL/6J</strain>
        <tissue>Brain</tissue>
    </source>
</reference>
<reference key="3">
    <citation type="journal article" date="2010" name="Cell">
        <title>A tissue-specific atlas of mouse protein phosphorylation and expression.</title>
        <authorList>
            <person name="Huttlin E.L."/>
            <person name="Jedrychowski M.P."/>
            <person name="Elias J.E."/>
            <person name="Goswami T."/>
            <person name="Rad R."/>
            <person name="Beausoleil S.A."/>
            <person name="Villen J."/>
            <person name="Haas W."/>
            <person name="Sowa M.E."/>
            <person name="Gygi S.P."/>
        </authorList>
    </citation>
    <scope>PHOSPHORYLATION [LARGE SCALE ANALYSIS] AT SER-291; SER-373; THR-427; SER-503; SER-555; SER-862; SER-929; SER-966 AND SER-1016</scope>
    <scope>IDENTIFICATION BY MASS SPECTROMETRY [LARGE SCALE ANALYSIS]</scope>
    <source>
        <tissue>Heart</tissue>
    </source>
</reference>
<proteinExistence type="evidence at protein level"/>
<dbReference type="EMBL" id="AK048603">
    <property type="protein sequence ID" value="BAC33386.1"/>
    <property type="molecule type" value="mRNA"/>
</dbReference>
<dbReference type="EMBL" id="AK142263">
    <property type="protein sequence ID" value="BAE25001.1"/>
    <property type="molecule type" value="mRNA"/>
</dbReference>
<dbReference type="EMBL" id="BC059034">
    <property type="protein sequence ID" value="AAH59034.1"/>
    <property type="molecule type" value="mRNA"/>
</dbReference>
<dbReference type="EMBL" id="BC117936">
    <property type="protein sequence ID" value="AAI17937.1"/>
    <property type="molecule type" value="mRNA"/>
</dbReference>
<dbReference type="CCDS" id="CCDS15446.1"/>
<dbReference type="RefSeq" id="NP_001028516.2">
    <property type="nucleotide sequence ID" value="NM_001033344.3"/>
</dbReference>
<dbReference type="RefSeq" id="NP_001153521.1">
    <property type="nucleotide sequence ID" value="NM_001160049.1"/>
</dbReference>
<dbReference type="SMR" id="Q148W8"/>
<dbReference type="BioGRID" id="232253">
    <property type="interactions" value="4"/>
</dbReference>
<dbReference type="FunCoup" id="Q148W8">
    <property type="interactions" value="441"/>
</dbReference>
<dbReference type="STRING" id="10090.ENSMUSP00000141564"/>
<dbReference type="iPTMnet" id="Q148W8"/>
<dbReference type="PhosphoSitePlus" id="Q148W8"/>
<dbReference type="PaxDb" id="10090-ENSMUSP00000083155"/>
<dbReference type="PeptideAtlas" id="Q148W8"/>
<dbReference type="ProteomicsDB" id="277638"/>
<dbReference type="Antibodypedia" id="2486">
    <property type="antibodies" value="18 antibodies from 10 providers"/>
</dbReference>
<dbReference type="DNASU" id="240892"/>
<dbReference type="Ensembl" id="ENSMUST00000085992.4">
    <property type="protein sequence ID" value="ENSMUSP00000083155.3"/>
    <property type="gene ID" value="ENSMUSG00000026564.10"/>
</dbReference>
<dbReference type="Ensembl" id="ENSMUST00000192369.6">
    <property type="protein sequence ID" value="ENSMUSP00000141564.2"/>
    <property type="gene ID" value="ENSMUSG00000026564.10"/>
</dbReference>
<dbReference type="GeneID" id="240892"/>
<dbReference type="KEGG" id="mmu:240892"/>
<dbReference type="UCSC" id="uc007dkh.2">
    <property type="organism name" value="mouse"/>
</dbReference>
<dbReference type="AGR" id="MGI:2685055"/>
<dbReference type="CTD" id="92235"/>
<dbReference type="MGI" id="MGI:2685055">
    <property type="gene designation" value="Styxl2"/>
</dbReference>
<dbReference type="VEuPathDB" id="HostDB:ENSMUSG00000026564"/>
<dbReference type="eggNOG" id="KOG1716">
    <property type="taxonomic scope" value="Eukaryota"/>
</dbReference>
<dbReference type="GeneTree" id="ENSGT00940000159723"/>
<dbReference type="HOGENOM" id="CLU_009343_0_0_1"/>
<dbReference type="InParanoid" id="Q148W8"/>
<dbReference type="OMA" id="LSMQTNH"/>
<dbReference type="OrthoDB" id="2017893at2759"/>
<dbReference type="PhylomeDB" id="Q148W8"/>
<dbReference type="TreeFam" id="TF351505"/>
<dbReference type="BioGRID-ORCS" id="240892">
    <property type="hits" value="0 hits in 80 CRISPR screens"/>
</dbReference>
<dbReference type="PRO" id="PR:Q148W8"/>
<dbReference type="Proteomes" id="UP000000589">
    <property type="component" value="Chromosome 1"/>
</dbReference>
<dbReference type="RNAct" id="Q148W8">
    <property type="molecule type" value="protein"/>
</dbReference>
<dbReference type="Bgee" id="ENSMUSG00000026564">
    <property type="expression patterns" value="Expressed in interventricular septum and 73 other cell types or tissues"/>
</dbReference>
<dbReference type="GO" id="GO:0030017">
    <property type="term" value="C:sarcomere"/>
    <property type="evidence" value="ECO:0007669"/>
    <property type="project" value="UniProtKB-SubCell"/>
</dbReference>
<dbReference type="GO" id="GO:0008138">
    <property type="term" value="F:protein tyrosine/serine/threonine phosphatase activity"/>
    <property type="evidence" value="ECO:0007669"/>
    <property type="project" value="InterPro"/>
</dbReference>
<dbReference type="Gene3D" id="3.90.190.10">
    <property type="entry name" value="Protein tyrosine phosphatase superfamily"/>
    <property type="match status" value="1"/>
</dbReference>
<dbReference type="InterPro" id="IPR020405">
    <property type="entry name" value="Atypical_DUSP_subfamA"/>
</dbReference>
<dbReference type="InterPro" id="IPR000340">
    <property type="entry name" value="Dual-sp_phosphatase_cat-dom"/>
</dbReference>
<dbReference type="InterPro" id="IPR029021">
    <property type="entry name" value="Prot-tyrosine_phosphatase-like"/>
</dbReference>
<dbReference type="InterPro" id="IPR000387">
    <property type="entry name" value="Tyr_Pase_dom"/>
</dbReference>
<dbReference type="InterPro" id="IPR020422">
    <property type="entry name" value="TYR_PHOSPHATASE_DUAL_dom"/>
</dbReference>
<dbReference type="PANTHER" id="PTHR45682">
    <property type="entry name" value="AGAP008228-PA"/>
    <property type="match status" value="1"/>
</dbReference>
<dbReference type="PANTHER" id="PTHR45682:SF4">
    <property type="entry name" value="SERINE_THREONINE_TYROSINE-INTERACTING-LIKE PROTEIN 2"/>
    <property type="match status" value="1"/>
</dbReference>
<dbReference type="Pfam" id="PF00782">
    <property type="entry name" value="DSPc"/>
    <property type="match status" value="1"/>
</dbReference>
<dbReference type="PRINTS" id="PR01908">
    <property type="entry name" value="ADSPHPHTASE"/>
</dbReference>
<dbReference type="PRINTS" id="PR01909">
    <property type="entry name" value="ADSPHPHTASEA"/>
</dbReference>
<dbReference type="SMART" id="SM00195">
    <property type="entry name" value="DSPc"/>
    <property type="match status" value="1"/>
</dbReference>
<dbReference type="SUPFAM" id="SSF52799">
    <property type="entry name" value="(Phosphotyrosine protein) phosphatases II"/>
    <property type="match status" value="1"/>
</dbReference>
<dbReference type="PROSITE" id="PS50056">
    <property type="entry name" value="TYR_PHOSPHATASE_2"/>
    <property type="match status" value="1"/>
</dbReference>
<dbReference type="PROSITE" id="PS50054">
    <property type="entry name" value="TYR_PHOSPHATASE_DUAL"/>
    <property type="match status" value="1"/>
</dbReference>
<comment type="function">
    <text evidence="1">May be required for myofiber maturation.</text>
</comment>
<comment type="subcellular location">
    <subcellularLocation>
        <location evidence="1">Cytoplasm</location>
        <location evidence="1">Myofibril</location>
        <location evidence="1">Sarcomere</location>
    </subcellularLocation>
</comment>
<comment type="similarity">
    <text evidence="4">Belongs to the protein-tyrosine phosphatase family. Non-receptor class dual specificity subfamily.</text>
</comment>
<comment type="caution">
    <text evidence="4">Ser-225 is present instead of the conserved Cys which is expected to be an active site residue suggesting that this protein has lost its phosphatase activity.</text>
</comment>
<evidence type="ECO:0000250" key="1">
    <source>
        <dbReference type="UniProtKB" id="F1QWM2"/>
    </source>
</evidence>
<evidence type="ECO:0000255" key="2">
    <source>
        <dbReference type="PROSITE-ProRule" id="PRU00160"/>
    </source>
</evidence>
<evidence type="ECO:0000256" key="3">
    <source>
        <dbReference type="SAM" id="MobiDB-lite"/>
    </source>
</evidence>
<evidence type="ECO:0000305" key="4"/>
<evidence type="ECO:0000312" key="5">
    <source>
        <dbReference type="MGI" id="MGI:2685055"/>
    </source>
</evidence>
<evidence type="ECO:0007744" key="6">
    <source>
    </source>
</evidence>
<gene>
    <name type="primary">Styxl2</name>
    <name evidence="5" type="synonym">Dusp27</name>
</gene>
<sequence length="1138" mass="128575">MATGGDAEEEQVVPNEEDEADVRAVQARYLRSPSPSQYSVVSEAETESIFMEPIHLSSAVAAKQIINEELKPRGLRTDTECPGMLESAEQLLVEDLYNRVREKMDDRSLFNTPCVLDLQRALTQDRQEAPRNEVDEVWPNVFIAEKSVAVNKGRLKRLGITHILNAAHGTGVYTGSEFYTGLEIQYLGVEVDDFPEVDISQHFRKAAEFLDEALLTYRGKVLVSSEMGISRSAVLVVAYLMIFHSMAILEALMTVRRKRAIYPNDGFLKQLRELNEKLMEEREEEDGEEESEEDAGSMLGARVNSLMVEEEDDATSHLSGSSLGKASQVSKPVTLIDDEEEEKKLYEEWRKGQGFPKGEAAQGRKGRSCSMSSAQDGDDCEDEDVERIIQEWQSRNERYQAKGREQWNREEEEEEENSYSSRRRRHTLSESSASESVSSHDIRILKQQLERSTQSRRGRYRSDSESSESTWDMWNERLVEIEKEAARKYRSKSKREELDGDCSEAGGRVREDDEESVLSEASSFYNFCSRNKDKLTPLERWKIKRIQFGFHKKDSEAGDGGSEHGTEEAAAGEKNLSDVNLTAYQAWKLKHQKKVGSENKEEVVEMSKGEDTVLAKKRQRRLELLERSRQTLEESQSMGSWEADSSTASRSIPLSAFSSAAPSVSADGDTASVLSTQSHRSHASNMPATPLPNLPVGPGDTISIASIQNWIANVVNETLAQKQNEMLLLSRPPSVASMKAAPAACGLGGDDQLSVLSTSLSGCLPPPSQGRPSSDVQSVLSSTSSLTSRAEGSGNKVRGTSKPIYSLFADNVDLKELGRKEKEMQMELQEKMSEYKMEKLASDNKRSSLFKKKKAKDDEDMSVGDRDEDTDSAIGSFRYSSRSNSQKPETDASSSLAISDHYRNGRSMGNEMDSNINTWLSGLRMEEKSPPQSDWSGSSRGRYTRSSLLRETESKSCSYKFSKSRSQEQDTSFHEANGDTVRNTSRFSSSTTKEAREMHKFSRSTFSETSSSREESPEPYFFRRTPEPSDGEESPEPRRPNWTRPRDWEDVEESSKSDFAEFGAKRKFTQSFMRSEEEGEKERTENREEGRFASGRQSQYRRSTNQQEEEEMDDEAIIAAWRKRQEETRTKLQRRRED</sequence>
<organism>
    <name type="scientific">Mus musculus</name>
    <name type="common">Mouse</name>
    <dbReference type="NCBI Taxonomy" id="10090"/>
    <lineage>
        <taxon>Eukaryota</taxon>
        <taxon>Metazoa</taxon>
        <taxon>Chordata</taxon>
        <taxon>Craniata</taxon>
        <taxon>Vertebrata</taxon>
        <taxon>Euteleostomi</taxon>
        <taxon>Mammalia</taxon>
        <taxon>Eutheria</taxon>
        <taxon>Euarchontoglires</taxon>
        <taxon>Glires</taxon>
        <taxon>Rodentia</taxon>
        <taxon>Myomorpha</taxon>
        <taxon>Muroidea</taxon>
        <taxon>Muridae</taxon>
        <taxon>Murinae</taxon>
        <taxon>Mus</taxon>
        <taxon>Mus</taxon>
    </lineage>
</organism>
<keyword id="KW-0963">Cytoplasm</keyword>
<keyword id="KW-0597">Phosphoprotein</keyword>
<keyword id="KW-1185">Reference proteome</keyword>
<protein>
    <recommendedName>
        <fullName>Serine/threonine/tyrosine-interacting-like protein 2</fullName>
    </recommendedName>
    <alternativeName>
        <fullName evidence="4">Inactive dual specificity phosphatase 27</fullName>
    </alternativeName>
</protein>
<accession>Q148W8</accession>
<accession>Q3UQN8</accession>
<accession>Q6PCZ9</accession>
<accession>Q8BX87</accession>